<gene>
    <name evidence="1" type="primary">rpl36</name>
</gene>
<proteinExistence type="inferred from homology"/>
<evidence type="ECO:0000255" key="1">
    <source>
        <dbReference type="HAMAP-Rule" id="MF_00251"/>
    </source>
</evidence>
<evidence type="ECO:0000305" key="2"/>
<feature type="chain" id="PRO_0000344771" description="Large ribosomal subunit protein bL36c">
    <location>
        <begin position="1"/>
        <end position="37"/>
    </location>
</feature>
<protein>
    <recommendedName>
        <fullName evidence="1">Large ribosomal subunit protein bL36c</fullName>
    </recommendedName>
    <alternativeName>
        <fullName evidence="2">50S ribosomal protein L36, chloroplastic</fullName>
    </alternativeName>
</protein>
<accession>Q09FS7</accession>
<reference key="1">
    <citation type="journal article" date="2006" name="BMC Plant Biol.">
        <title>Rapid and accurate pyrosequencing of angiosperm plastid genomes.</title>
        <authorList>
            <person name="Moore M.J."/>
            <person name="Dhingra A."/>
            <person name="Soltis P.S."/>
            <person name="Shaw R."/>
            <person name="Farmerie W.G."/>
            <person name="Folta K.M."/>
            <person name="Soltis D.E."/>
        </authorList>
    </citation>
    <scope>NUCLEOTIDE SEQUENCE [LARGE SCALE GENOMIC DNA]</scope>
</reference>
<keyword id="KW-0150">Chloroplast</keyword>
<keyword id="KW-0934">Plastid</keyword>
<keyword id="KW-0687">Ribonucleoprotein</keyword>
<keyword id="KW-0689">Ribosomal protein</keyword>
<sequence length="37" mass="4460">MKIRASVRKICEKCRLIRRRGRIIVICSNPRHKQRQG</sequence>
<comment type="subcellular location">
    <subcellularLocation>
        <location>Plastid</location>
        <location>Chloroplast</location>
    </subcellularLocation>
</comment>
<comment type="similarity">
    <text evidence="1">Belongs to the bacterial ribosomal protein bL36 family.</text>
</comment>
<organism>
    <name type="scientific">Nandina domestica</name>
    <name type="common">Heavenly bamboo</name>
    <dbReference type="NCBI Taxonomy" id="41776"/>
    <lineage>
        <taxon>Eukaryota</taxon>
        <taxon>Viridiplantae</taxon>
        <taxon>Streptophyta</taxon>
        <taxon>Embryophyta</taxon>
        <taxon>Tracheophyta</taxon>
        <taxon>Spermatophyta</taxon>
        <taxon>Magnoliopsida</taxon>
        <taxon>Ranunculales</taxon>
        <taxon>Berberidaceae</taxon>
        <taxon>Nandinoideae</taxon>
        <taxon>Nandineae</taxon>
        <taxon>Nandina</taxon>
    </lineage>
</organism>
<dbReference type="EMBL" id="DQ923117">
    <property type="protein sequence ID" value="ABI49898.1"/>
    <property type="molecule type" value="Genomic_DNA"/>
</dbReference>
<dbReference type="RefSeq" id="YP_740684.1">
    <property type="nucleotide sequence ID" value="NC_008336.1"/>
</dbReference>
<dbReference type="SMR" id="Q09FS7"/>
<dbReference type="GeneID" id="4271695"/>
<dbReference type="GO" id="GO:0009507">
    <property type="term" value="C:chloroplast"/>
    <property type="evidence" value="ECO:0007669"/>
    <property type="project" value="UniProtKB-SubCell"/>
</dbReference>
<dbReference type="GO" id="GO:1990904">
    <property type="term" value="C:ribonucleoprotein complex"/>
    <property type="evidence" value="ECO:0007669"/>
    <property type="project" value="UniProtKB-KW"/>
</dbReference>
<dbReference type="GO" id="GO:0005840">
    <property type="term" value="C:ribosome"/>
    <property type="evidence" value="ECO:0007669"/>
    <property type="project" value="UniProtKB-KW"/>
</dbReference>
<dbReference type="GO" id="GO:0003735">
    <property type="term" value="F:structural constituent of ribosome"/>
    <property type="evidence" value="ECO:0007669"/>
    <property type="project" value="InterPro"/>
</dbReference>
<dbReference type="GO" id="GO:0006412">
    <property type="term" value="P:translation"/>
    <property type="evidence" value="ECO:0007669"/>
    <property type="project" value="UniProtKB-UniRule"/>
</dbReference>
<dbReference type="HAMAP" id="MF_00251">
    <property type="entry name" value="Ribosomal_bL36"/>
    <property type="match status" value="1"/>
</dbReference>
<dbReference type="InterPro" id="IPR000473">
    <property type="entry name" value="Ribosomal_bL36"/>
</dbReference>
<dbReference type="InterPro" id="IPR035977">
    <property type="entry name" value="Ribosomal_bL36_sp"/>
</dbReference>
<dbReference type="NCBIfam" id="TIGR01022">
    <property type="entry name" value="rpmJ_bact"/>
    <property type="match status" value="1"/>
</dbReference>
<dbReference type="PANTHER" id="PTHR42888">
    <property type="entry name" value="50S RIBOSOMAL PROTEIN L36, CHLOROPLASTIC"/>
    <property type="match status" value="1"/>
</dbReference>
<dbReference type="PANTHER" id="PTHR42888:SF1">
    <property type="entry name" value="LARGE RIBOSOMAL SUBUNIT PROTEIN BL36C"/>
    <property type="match status" value="1"/>
</dbReference>
<dbReference type="Pfam" id="PF00444">
    <property type="entry name" value="Ribosomal_L36"/>
    <property type="match status" value="1"/>
</dbReference>
<dbReference type="SUPFAM" id="SSF57840">
    <property type="entry name" value="Ribosomal protein L36"/>
    <property type="match status" value="1"/>
</dbReference>
<dbReference type="PROSITE" id="PS00828">
    <property type="entry name" value="RIBOSOMAL_L36"/>
    <property type="match status" value="1"/>
</dbReference>
<name>RK36_NANDO</name>
<geneLocation type="chloroplast"/>